<evidence type="ECO:0000255" key="1">
    <source>
        <dbReference type="HAMAP-Rule" id="MF_01846"/>
    </source>
</evidence>
<protein>
    <recommendedName>
        <fullName evidence="1">Nucleoside triphosphatase NudI</fullName>
        <ecNumber evidence="1">3.6.1.9</ecNumber>
    </recommendedName>
    <alternativeName>
        <fullName evidence="1">Nucleotide diphosphatase NudI</fullName>
    </alternativeName>
    <alternativeName>
        <fullName evidence="1">Pyrimidine deoxynucleoside triphosphate diphosphatase</fullName>
    </alternativeName>
    <alternativeName>
        <fullName evidence="1">dCTP diphosphatase</fullName>
        <ecNumber evidence="1">3.6.1.12</ecNumber>
    </alternativeName>
    <alternativeName>
        <fullName evidence="1">dTTP diphosphatase</fullName>
        <ecNumber evidence="1">3.6.1.-</ecNumber>
    </alternativeName>
    <alternativeName>
        <fullName evidence="1">dUTP diphosphatase</fullName>
        <ecNumber evidence="1">3.6.1.23</ecNumber>
    </alternativeName>
</protein>
<reference key="1">
    <citation type="journal article" date="2006" name="Proc. Natl. Acad. Sci. U.S.A.">
        <title>Identification of genes subject to positive selection in uropathogenic strains of Escherichia coli: a comparative genomics approach.</title>
        <authorList>
            <person name="Chen S.L."/>
            <person name="Hung C.-S."/>
            <person name="Xu J."/>
            <person name="Reigstad C.S."/>
            <person name="Magrini V."/>
            <person name="Sabo A."/>
            <person name="Blasiar D."/>
            <person name="Bieri T."/>
            <person name="Meyer R.R."/>
            <person name="Ozersky P."/>
            <person name="Armstrong J.R."/>
            <person name="Fulton R.S."/>
            <person name="Latreille J.P."/>
            <person name="Spieth J."/>
            <person name="Hooton T.M."/>
            <person name="Mardis E.R."/>
            <person name="Hultgren S.J."/>
            <person name="Gordon J.I."/>
        </authorList>
    </citation>
    <scope>NUCLEOTIDE SEQUENCE [LARGE SCALE GENOMIC DNA]</scope>
    <source>
        <strain>UTI89 / UPEC</strain>
    </source>
</reference>
<sequence>MRQRTIVCPLIQNDGAYLLCKMADDRGVFPGQWALSGGGVEPGERIEEALRREIREELGEQLLLTEITPWTFSDDIRTKTYADGRKEEIYMIYLIFDCVSANREVKINEEFQDYAWVKPEDLVHYDLNVATRKTLRLKGLL</sequence>
<proteinExistence type="inferred from homology"/>
<gene>
    <name evidence="1" type="primary">nudI</name>
    <name type="ordered locus">UTI89_C2533</name>
</gene>
<name>NUDI_ECOUT</name>
<comment type="function">
    <text evidence="1">Catalyzes the hydrolysis of nucleoside triphosphates, with a preference for pyrimidine deoxynucleoside triphosphates (dUTP, dTTP and dCTP).</text>
</comment>
<comment type="catalytic activity">
    <reaction evidence="1">
        <text>a ribonucleoside 5'-triphosphate + H2O = a ribonucleoside 5'-phosphate + diphosphate + H(+)</text>
        <dbReference type="Rhea" id="RHEA:23996"/>
        <dbReference type="ChEBI" id="CHEBI:15377"/>
        <dbReference type="ChEBI" id="CHEBI:15378"/>
        <dbReference type="ChEBI" id="CHEBI:33019"/>
        <dbReference type="ChEBI" id="CHEBI:58043"/>
        <dbReference type="ChEBI" id="CHEBI:61557"/>
        <dbReference type="EC" id="3.6.1.9"/>
    </reaction>
</comment>
<comment type="catalytic activity">
    <reaction evidence="1">
        <text>a 2'-deoxyribonucleoside 5'-triphosphate + H2O = a 2'-deoxyribonucleoside 5'-phosphate + diphosphate + H(+)</text>
        <dbReference type="Rhea" id="RHEA:44644"/>
        <dbReference type="ChEBI" id="CHEBI:15377"/>
        <dbReference type="ChEBI" id="CHEBI:15378"/>
        <dbReference type="ChEBI" id="CHEBI:33019"/>
        <dbReference type="ChEBI" id="CHEBI:61560"/>
        <dbReference type="ChEBI" id="CHEBI:65317"/>
        <dbReference type="EC" id="3.6.1.9"/>
    </reaction>
</comment>
<comment type="catalytic activity">
    <reaction evidence="1">
        <text>dUTP + H2O = dUMP + diphosphate + H(+)</text>
        <dbReference type="Rhea" id="RHEA:10248"/>
        <dbReference type="ChEBI" id="CHEBI:15377"/>
        <dbReference type="ChEBI" id="CHEBI:15378"/>
        <dbReference type="ChEBI" id="CHEBI:33019"/>
        <dbReference type="ChEBI" id="CHEBI:61555"/>
        <dbReference type="ChEBI" id="CHEBI:246422"/>
        <dbReference type="EC" id="3.6.1.9"/>
    </reaction>
</comment>
<comment type="catalytic activity">
    <reaction evidence="1">
        <text>dUTP + H2O = dUMP + diphosphate + H(+)</text>
        <dbReference type="Rhea" id="RHEA:10248"/>
        <dbReference type="ChEBI" id="CHEBI:15377"/>
        <dbReference type="ChEBI" id="CHEBI:15378"/>
        <dbReference type="ChEBI" id="CHEBI:33019"/>
        <dbReference type="ChEBI" id="CHEBI:61555"/>
        <dbReference type="ChEBI" id="CHEBI:246422"/>
        <dbReference type="EC" id="3.6.1.23"/>
    </reaction>
</comment>
<comment type="catalytic activity">
    <reaction evidence="1">
        <text>dTTP + H2O = dTMP + diphosphate + H(+)</text>
        <dbReference type="Rhea" id="RHEA:28534"/>
        <dbReference type="ChEBI" id="CHEBI:15377"/>
        <dbReference type="ChEBI" id="CHEBI:15378"/>
        <dbReference type="ChEBI" id="CHEBI:33019"/>
        <dbReference type="ChEBI" id="CHEBI:37568"/>
        <dbReference type="ChEBI" id="CHEBI:63528"/>
        <dbReference type="EC" id="3.6.1.9"/>
    </reaction>
</comment>
<comment type="catalytic activity">
    <reaction evidence="1">
        <text>dCTP + H2O = dCMP + diphosphate + H(+)</text>
        <dbReference type="Rhea" id="RHEA:22636"/>
        <dbReference type="ChEBI" id="CHEBI:15377"/>
        <dbReference type="ChEBI" id="CHEBI:15378"/>
        <dbReference type="ChEBI" id="CHEBI:33019"/>
        <dbReference type="ChEBI" id="CHEBI:57566"/>
        <dbReference type="ChEBI" id="CHEBI:61481"/>
        <dbReference type="EC" id="3.6.1.9"/>
    </reaction>
</comment>
<comment type="catalytic activity">
    <reaction evidence="1">
        <text>dCTP + H2O = dCMP + diphosphate + H(+)</text>
        <dbReference type="Rhea" id="RHEA:22636"/>
        <dbReference type="ChEBI" id="CHEBI:15377"/>
        <dbReference type="ChEBI" id="CHEBI:15378"/>
        <dbReference type="ChEBI" id="CHEBI:33019"/>
        <dbReference type="ChEBI" id="CHEBI:57566"/>
        <dbReference type="ChEBI" id="CHEBI:61481"/>
        <dbReference type="EC" id="3.6.1.12"/>
    </reaction>
</comment>
<comment type="cofactor">
    <cofactor evidence="1">
        <name>Mg(2+)</name>
        <dbReference type="ChEBI" id="CHEBI:18420"/>
    </cofactor>
</comment>
<comment type="subunit">
    <text evidence="1">Monomer.</text>
</comment>
<comment type="similarity">
    <text evidence="1">Belongs to the Nudix hydrolase family. NudI subfamily.</text>
</comment>
<organism>
    <name type="scientific">Escherichia coli (strain UTI89 / UPEC)</name>
    <dbReference type="NCBI Taxonomy" id="364106"/>
    <lineage>
        <taxon>Bacteria</taxon>
        <taxon>Pseudomonadati</taxon>
        <taxon>Pseudomonadota</taxon>
        <taxon>Gammaproteobacteria</taxon>
        <taxon>Enterobacterales</taxon>
        <taxon>Enterobacteriaceae</taxon>
        <taxon>Escherichia</taxon>
    </lineage>
</organism>
<dbReference type="EC" id="3.6.1.9" evidence="1"/>
<dbReference type="EC" id="3.6.1.12" evidence="1"/>
<dbReference type="EC" id="3.6.1.-" evidence="1"/>
<dbReference type="EC" id="3.6.1.23" evidence="1"/>
<dbReference type="EMBL" id="CP000243">
    <property type="protein sequence ID" value="ABE08000.1"/>
    <property type="molecule type" value="Genomic_DNA"/>
</dbReference>
<dbReference type="RefSeq" id="WP_001249884.1">
    <property type="nucleotide sequence ID" value="NZ_CP064825.1"/>
</dbReference>
<dbReference type="SMR" id="Q1R9G4"/>
<dbReference type="GeneID" id="75172382"/>
<dbReference type="KEGG" id="eci:UTI89_C2533"/>
<dbReference type="HOGENOM" id="CLU_037162_31_0_6"/>
<dbReference type="Proteomes" id="UP000001952">
    <property type="component" value="Chromosome"/>
</dbReference>
<dbReference type="GO" id="GO:0047840">
    <property type="term" value="F:dCTP diphosphatase activity"/>
    <property type="evidence" value="ECO:0007669"/>
    <property type="project" value="UniProtKB-EC"/>
</dbReference>
<dbReference type="GO" id="GO:0036218">
    <property type="term" value="F:dTTP diphosphatase activity"/>
    <property type="evidence" value="ECO:0007669"/>
    <property type="project" value="RHEA"/>
</dbReference>
<dbReference type="GO" id="GO:0004170">
    <property type="term" value="F:dUTP diphosphatase activity"/>
    <property type="evidence" value="ECO:0007669"/>
    <property type="project" value="UniProtKB-EC"/>
</dbReference>
<dbReference type="GO" id="GO:0000287">
    <property type="term" value="F:magnesium ion binding"/>
    <property type="evidence" value="ECO:0007669"/>
    <property type="project" value="UniProtKB-UniRule"/>
</dbReference>
<dbReference type="FunFam" id="3.90.79.10:FF:000039">
    <property type="entry name" value="Nucleoside triphosphatase NudI"/>
    <property type="match status" value="1"/>
</dbReference>
<dbReference type="Gene3D" id="3.90.79.10">
    <property type="entry name" value="Nucleoside Triphosphate Pyrophosphohydrolase"/>
    <property type="match status" value="1"/>
</dbReference>
<dbReference type="HAMAP" id="MF_01846">
    <property type="entry name" value="Nudix_NudI"/>
    <property type="match status" value="1"/>
</dbReference>
<dbReference type="InterPro" id="IPR023781">
    <property type="entry name" value="Nucleoside_triphosphatase_NudI"/>
</dbReference>
<dbReference type="InterPro" id="IPR020476">
    <property type="entry name" value="Nudix_hydrolase"/>
</dbReference>
<dbReference type="InterPro" id="IPR015797">
    <property type="entry name" value="NUDIX_hydrolase-like_dom_sf"/>
</dbReference>
<dbReference type="InterPro" id="IPR020084">
    <property type="entry name" value="NUDIX_hydrolase_CS"/>
</dbReference>
<dbReference type="InterPro" id="IPR000086">
    <property type="entry name" value="NUDIX_hydrolase_dom"/>
</dbReference>
<dbReference type="NCBIfam" id="NF012016">
    <property type="entry name" value="PRK15472.1"/>
    <property type="match status" value="1"/>
</dbReference>
<dbReference type="PANTHER" id="PTHR43046">
    <property type="entry name" value="GDP-MANNOSE MANNOSYL HYDROLASE"/>
    <property type="match status" value="1"/>
</dbReference>
<dbReference type="PANTHER" id="PTHR43046:SF14">
    <property type="entry name" value="MUTT_NUDIX FAMILY PROTEIN"/>
    <property type="match status" value="1"/>
</dbReference>
<dbReference type="Pfam" id="PF00293">
    <property type="entry name" value="NUDIX"/>
    <property type="match status" value="1"/>
</dbReference>
<dbReference type="PRINTS" id="PR00502">
    <property type="entry name" value="NUDIXFAMILY"/>
</dbReference>
<dbReference type="SUPFAM" id="SSF55811">
    <property type="entry name" value="Nudix"/>
    <property type="match status" value="1"/>
</dbReference>
<dbReference type="PROSITE" id="PS51462">
    <property type="entry name" value="NUDIX"/>
    <property type="match status" value="1"/>
</dbReference>
<dbReference type="PROSITE" id="PS00893">
    <property type="entry name" value="NUDIX_BOX"/>
    <property type="match status" value="1"/>
</dbReference>
<accession>Q1R9G4</accession>
<feature type="chain" id="PRO_0000342127" description="Nucleoside triphosphatase NudI">
    <location>
        <begin position="1"/>
        <end position="141"/>
    </location>
</feature>
<feature type="domain" description="Nudix hydrolase" evidence="1">
    <location>
        <begin position="1"/>
        <end position="141"/>
    </location>
</feature>
<feature type="short sequence motif" description="Nudix box">
    <location>
        <begin position="38"/>
        <end position="59"/>
    </location>
</feature>
<keyword id="KW-0378">Hydrolase</keyword>
<keyword id="KW-0460">Magnesium</keyword>